<proteinExistence type="evidence at transcript level"/>
<protein>
    <recommendedName>
        <fullName>Probable 6-phosphogluconolactonase 2</fullName>
        <shortName>6PGL 2</shortName>
        <ecNumber>3.1.1.31</ecNumber>
    </recommendedName>
</protein>
<keyword id="KW-0378">Hydrolase</keyword>
<keyword id="KW-1185">Reference proteome</keyword>
<accession>Q6Z4H0</accession>
<accession>B7EHT5</accession>
<accession>Q0D4U1</accession>
<dbReference type="EC" id="3.1.1.31"/>
<dbReference type="EMBL" id="AP005175">
    <property type="protein sequence ID" value="BAC83870.1"/>
    <property type="molecule type" value="Genomic_DNA"/>
</dbReference>
<dbReference type="EMBL" id="AP008213">
    <property type="protein sequence ID" value="BAF22132.1"/>
    <property type="status" value="ALT_SEQ"/>
    <property type="molecule type" value="Genomic_DNA"/>
</dbReference>
<dbReference type="EMBL" id="AP014963">
    <property type="protein sequence ID" value="BAT02546.1"/>
    <property type="molecule type" value="Genomic_DNA"/>
</dbReference>
<dbReference type="EMBL" id="CM000144">
    <property type="protein sequence ID" value="EAZ40578.1"/>
    <property type="molecule type" value="Genomic_DNA"/>
</dbReference>
<dbReference type="EMBL" id="AK070405">
    <property type="protein sequence ID" value="BAG91932.1"/>
    <property type="molecule type" value="mRNA"/>
</dbReference>
<dbReference type="RefSeq" id="XP_015647667.1">
    <property type="nucleotide sequence ID" value="XM_015792181.1"/>
</dbReference>
<dbReference type="RefSeq" id="XP_015647668.1">
    <property type="nucleotide sequence ID" value="XM_015792182.1"/>
</dbReference>
<dbReference type="SMR" id="Q6Z4H0"/>
<dbReference type="FunCoup" id="Q6Z4H0">
    <property type="interactions" value="2213"/>
</dbReference>
<dbReference type="STRING" id="39947.Q6Z4H0"/>
<dbReference type="PaxDb" id="39947-Q6Z4H0"/>
<dbReference type="EnsemblPlants" id="Os07t0604000-01">
    <property type="protein sequence ID" value="Os07t0604000-01"/>
    <property type="gene ID" value="Os07g0604000"/>
</dbReference>
<dbReference type="Gramene" id="Os07t0604000-01">
    <property type="protein sequence ID" value="Os07t0604000-01"/>
    <property type="gene ID" value="Os07g0604000"/>
</dbReference>
<dbReference type="KEGG" id="dosa:Os07g0604000"/>
<dbReference type="eggNOG" id="KOG3147">
    <property type="taxonomic scope" value="Eukaryota"/>
</dbReference>
<dbReference type="HOGENOM" id="CLU_053947_0_0_1"/>
<dbReference type="InParanoid" id="Q6Z4H0"/>
<dbReference type="OMA" id="YQLFEFE"/>
<dbReference type="OrthoDB" id="432544at2759"/>
<dbReference type="UniPathway" id="UPA00115">
    <property type="reaction ID" value="UER00409"/>
</dbReference>
<dbReference type="Proteomes" id="UP000000763">
    <property type="component" value="Chromosome 7"/>
</dbReference>
<dbReference type="Proteomes" id="UP000007752">
    <property type="component" value="Chromosome 7"/>
</dbReference>
<dbReference type="Proteomes" id="UP000059680">
    <property type="component" value="Chromosome 7"/>
</dbReference>
<dbReference type="ExpressionAtlas" id="Q6Z4H0">
    <property type="expression patterns" value="baseline and differential"/>
</dbReference>
<dbReference type="GO" id="GO:0005829">
    <property type="term" value="C:cytosol"/>
    <property type="evidence" value="ECO:0000318"/>
    <property type="project" value="GO_Central"/>
</dbReference>
<dbReference type="GO" id="GO:0017057">
    <property type="term" value="F:6-phosphogluconolactonase activity"/>
    <property type="evidence" value="ECO:0000318"/>
    <property type="project" value="GO_Central"/>
</dbReference>
<dbReference type="GO" id="GO:0005975">
    <property type="term" value="P:carbohydrate metabolic process"/>
    <property type="evidence" value="ECO:0007669"/>
    <property type="project" value="InterPro"/>
</dbReference>
<dbReference type="GO" id="GO:0009051">
    <property type="term" value="P:pentose-phosphate shunt, oxidative branch"/>
    <property type="evidence" value="ECO:0000318"/>
    <property type="project" value="GO_Central"/>
</dbReference>
<dbReference type="CDD" id="cd01400">
    <property type="entry name" value="6PGL"/>
    <property type="match status" value="1"/>
</dbReference>
<dbReference type="FunFam" id="3.40.50.1360:FF:000009">
    <property type="entry name" value="Probable 6-phosphogluconolactonase"/>
    <property type="match status" value="1"/>
</dbReference>
<dbReference type="Gene3D" id="3.40.50.1360">
    <property type="match status" value="1"/>
</dbReference>
<dbReference type="InterPro" id="IPR005900">
    <property type="entry name" value="6-phosphogluconolactonase_DevB"/>
</dbReference>
<dbReference type="InterPro" id="IPR006148">
    <property type="entry name" value="Glc/Gal-6P_isomerase"/>
</dbReference>
<dbReference type="InterPro" id="IPR037171">
    <property type="entry name" value="NagB/RpiA_transferase-like"/>
</dbReference>
<dbReference type="InterPro" id="IPR039104">
    <property type="entry name" value="PGLS"/>
</dbReference>
<dbReference type="NCBIfam" id="TIGR01198">
    <property type="entry name" value="pgl"/>
    <property type="match status" value="1"/>
</dbReference>
<dbReference type="PANTHER" id="PTHR11054">
    <property type="entry name" value="6-PHOSPHOGLUCONOLACTONASE"/>
    <property type="match status" value="1"/>
</dbReference>
<dbReference type="PANTHER" id="PTHR11054:SF8">
    <property type="entry name" value="6-PHOSPHOGLUCONOLACTONASE 2-RELATED"/>
    <property type="match status" value="1"/>
</dbReference>
<dbReference type="Pfam" id="PF01182">
    <property type="entry name" value="Glucosamine_iso"/>
    <property type="match status" value="1"/>
</dbReference>
<dbReference type="SUPFAM" id="SSF100950">
    <property type="entry name" value="NagB/RpiA/CoA transferase-like"/>
    <property type="match status" value="1"/>
</dbReference>
<sequence>MEREISALYEPKRNNEIRIFESSDEMSTDLAEYISQVSEISVKERGYFAIALSGGPLVSFLGKLCEAPYNKTLDWSKWYIFWSDERAVAKNHAESNYRITKEGFLSKVPILNGHVYSINDNATVEDAATDYEFVIRQLVKVRTIGVSESNDCPKFDLILLSMGSDGHVASLFPNHPSLELKDDWITYITDSPQPPPERITFTLPVINSASNIAIVTTGDDKSEAVHLAISDNADGPEAPSSLPARMVQPTDGKLVWFLDKSAASSLDAENDDAFEQHREY</sequence>
<gene>
    <name type="ordered locus">Os07g0604000</name>
    <name type="ordered locus">LOC_Os07g41280</name>
    <name type="ORF">OsJ_024061</name>
    <name type="ORF">OSJNBb0040H10.9</name>
</gene>
<comment type="function">
    <text evidence="1">Hydrolysis of 6-phosphogluconolactone to 6-phosphogluconate.</text>
</comment>
<comment type="catalytic activity">
    <reaction>
        <text>6-phospho-D-glucono-1,5-lactone + H2O = 6-phospho-D-gluconate + H(+)</text>
        <dbReference type="Rhea" id="RHEA:12556"/>
        <dbReference type="ChEBI" id="CHEBI:15377"/>
        <dbReference type="ChEBI" id="CHEBI:15378"/>
        <dbReference type="ChEBI" id="CHEBI:57955"/>
        <dbReference type="ChEBI" id="CHEBI:58759"/>
        <dbReference type="EC" id="3.1.1.31"/>
    </reaction>
</comment>
<comment type="pathway">
    <text>Carbohydrate degradation; pentose phosphate pathway; D-ribulose 5-phosphate from D-glucose 6-phosphate (oxidative stage): step 2/3.</text>
</comment>
<comment type="similarity">
    <text evidence="2">Belongs to the glucosamine/galactosamine-6-phosphate isomerase family. 6-phosphogluconolactonase subfamily.</text>
</comment>
<comment type="sequence caution" evidence="2">
    <conflict type="erroneous gene model prediction">
        <sequence resource="EMBL-CDS" id="BAF22132"/>
    </conflict>
</comment>
<reference key="1">
    <citation type="journal article" date="2005" name="Nature">
        <title>The map-based sequence of the rice genome.</title>
        <authorList>
            <consortium name="International rice genome sequencing project (IRGSP)"/>
        </authorList>
    </citation>
    <scope>NUCLEOTIDE SEQUENCE [LARGE SCALE GENOMIC DNA]</scope>
    <source>
        <strain>cv. Nipponbare</strain>
    </source>
</reference>
<reference key="2">
    <citation type="journal article" date="2008" name="Nucleic Acids Res.">
        <title>The rice annotation project database (RAP-DB): 2008 update.</title>
        <authorList>
            <consortium name="The rice annotation project (RAP)"/>
        </authorList>
    </citation>
    <scope>GENOME REANNOTATION</scope>
    <source>
        <strain>cv. Nipponbare</strain>
    </source>
</reference>
<reference key="3">
    <citation type="journal article" date="2013" name="Rice">
        <title>Improvement of the Oryza sativa Nipponbare reference genome using next generation sequence and optical map data.</title>
        <authorList>
            <person name="Kawahara Y."/>
            <person name="de la Bastide M."/>
            <person name="Hamilton J.P."/>
            <person name="Kanamori H."/>
            <person name="McCombie W.R."/>
            <person name="Ouyang S."/>
            <person name="Schwartz D.C."/>
            <person name="Tanaka T."/>
            <person name="Wu J."/>
            <person name="Zhou S."/>
            <person name="Childs K.L."/>
            <person name="Davidson R.M."/>
            <person name="Lin H."/>
            <person name="Quesada-Ocampo L."/>
            <person name="Vaillancourt B."/>
            <person name="Sakai H."/>
            <person name="Lee S.S."/>
            <person name="Kim J."/>
            <person name="Numa H."/>
            <person name="Itoh T."/>
            <person name="Buell C.R."/>
            <person name="Matsumoto T."/>
        </authorList>
    </citation>
    <scope>GENOME REANNOTATION</scope>
    <source>
        <strain>cv. Nipponbare</strain>
    </source>
</reference>
<reference key="4">
    <citation type="journal article" date="2005" name="PLoS Biol.">
        <title>The genomes of Oryza sativa: a history of duplications.</title>
        <authorList>
            <person name="Yu J."/>
            <person name="Wang J."/>
            <person name="Lin W."/>
            <person name="Li S."/>
            <person name="Li H."/>
            <person name="Zhou J."/>
            <person name="Ni P."/>
            <person name="Dong W."/>
            <person name="Hu S."/>
            <person name="Zeng C."/>
            <person name="Zhang J."/>
            <person name="Zhang Y."/>
            <person name="Li R."/>
            <person name="Xu Z."/>
            <person name="Li S."/>
            <person name="Li X."/>
            <person name="Zheng H."/>
            <person name="Cong L."/>
            <person name="Lin L."/>
            <person name="Yin J."/>
            <person name="Geng J."/>
            <person name="Li G."/>
            <person name="Shi J."/>
            <person name="Liu J."/>
            <person name="Lv H."/>
            <person name="Li J."/>
            <person name="Wang J."/>
            <person name="Deng Y."/>
            <person name="Ran L."/>
            <person name="Shi X."/>
            <person name="Wang X."/>
            <person name="Wu Q."/>
            <person name="Li C."/>
            <person name="Ren X."/>
            <person name="Wang J."/>
            <person name="Wang X."/>
            <person name="Li D."/>
            <person name="Liu D."/>
            <person name="Zhang X."/>
            <person name="Ji Z."/>
            <person name="Zhao W."/>
            <person name="Sun Y."/>
            <person name="Zhang Z."/>
            <person name="Bao J."/>
            <person name="Han Y."/>
            <person name="Dong L."/>
            <person name="Ji J."/>
            <person name="Chen P."/>
            <person name="Wu S."/>
            <person name="Liu J."/>
            <person name="Xiao Y."/>
            <person name="Bu D."/>
            <person name="Tan J."/>
            <person name="Yang L."/>
            <person name="Ye C."/>
            <person name="Zhang J."/>
            <person name="Xu J."/>
            <person name="Zhou Y."/>
            <person name="Yu Y."/>
            <person name="Zhang B."/>
            <person name="Zhuang S."/>
            <person name="Wei H."/>
            <person name="Liu B."/>
            <person name="Lei M."/>
            <person name="Yu H."/>
            <person name="Li Y."/>
            <person name="Xu H."/>
            <person name="Wei S."/>
            <person name="He X."/>
            <person name="Fang L."/>
            <person name="Zhang Z."/>
            <person name="Zhang Y."/>
            <person name="Huang X."/>
            <person name="Su Z."/>
            <person name="Tong W."/>
            <person name="Li J."/>
            <person name="Tong Z."/>
            <person name="Li S."/>
            <person name="Ye J."/>
            <person name="Wang L."/>
            <person name="Fang L."/>
            <person name="Lei T."/>
            <person name="Chen C.-S."/>
            <person name="Chen H.-C."/>
            <person name="Xu Z."/>
            <person name="Li H."/>
            <person name="Huang H."/>
            <person name="Zhang F."/>
            <person name="Xu H."/>
            <person name="Li N."/>
            <person name="Zhao C."/>
            <person name="Li S."/>
            <person name="Dong L."/>
            <person name="Huang Y."/>
            <person name="Li L."/>
            <person name="Xi Y."/>
            <person name="Qi Q."/>
            <person name="Li W."/>
            <person name="Zhang B."/>
            <person name="Hu W."/>
            <person name="Zhang Y."/>
            <person name="Tian X."/>
            <person name="Jiao Y."/>
            <person name="Liang X."/>
            <person name="Jin J."/>
            <person name="Gao L."/>
            <person name="Zheng W."/>
            <person name="Hao B."/>
            <person name="Liu S.-M."/>
            <person name="Wang W."/>
            <person name="Yuan L."/>
            <person name="Cao M."/>
            <person name="McDermott J."/>
            <person name="Samudrala R."/>
            <person name="Wang J."/>
            <person name="Wong G.K.-S."/>
            <person name="Yang H."/>
        </authorList>
    </citation>
    <scope>NUCLEOTIDE SEQUENCE [LARGE SCALE GENOMIC DNA]</scope>
    <source>
        <strain>cv. Nipponbare</strain>
    </source>
</reference>
<reference key="5">
    <citation type="journal article" date="2003" name="Science">
        <title>Collection, mapping, and annotation of over 28,000 cDNA clones from japonica rice.</title>
        <authorList>
            <consortium name="The rice full-length cDNA consortium"/>
        </authorList>
    </citation>
    <scope>NUCLEOTIDE SEQUENCE [LARGE SCALE MRNA]</scope>
    <source>
        <strain>cv. Nipponbare</strain>
    </source>
</reference>
<organism>
    <name type="scientific">Oryza sativa subsp. japonica</name>
    <name type="common">Rice</name>
    <dbReference type="NCBI Taxonomy" id="39947"/>
    <lineage>
        <taxon>Eukaryota</taxon>
        <taxon>Viridiplantae</taxon>
        <taxon>Streptophyta</taxon>
        <taxon>Embryophyta</taxon>
        <taxon>Tracheophyta</taxon>
        <taxon>Spermatophyta</taxon>
        <taxon>Magnoliopsida</taxon>
        <taxon>Liliopsida</taxon>
        <taxon>Poales</taxon>
        <taxon>Poaceae</taxon>
        <taxon>BOP clade</taxon>
        <taxon>Oryzoideae</taxon>
        <taxon>Oryzeae</taxon>
        <taxon>Oryzinae</taxon>
        <taxon>Oryza</taxon>
        <taxon>Oryza sativa</taxon>
    </lineage>
</organism>
<evidence type="ECO:0000250" key="1"/>
<evidence type="ECO:0000305" key="2"/>
<feature type="chain" id="PRO_0000288676" description="Probable 6-phosphogluconolactonase 2">
    <location>
        <begin position="1"/>
        <end position="280"/>
    </location>
</feature>
<name>6PGL2_ORYSJ</name>